<protein>
    <recommendedName>
        <fullName evidence="1">Bis(5'-nucleosyl)-tetraphosphatase, symmetrical</fullName>
        <ecNumber evidence="1">3.6.1.41</ecNumber>
    </recommendedName>
    <alternativeName>
        <fullName evidence="1">Ap4A hydrolase</fullName>
    </alternativeName>
    <alternativeName>
        <fullName evidence="1">Diadenosine 5',5'''-P1,P4-tetraphosphate pyrophosphohydrolase</fullName>
    </alternativeName>
    <alternativeName>
        <fullName evidence="1">Diadenosine tetraphosphatase</fullName>
    </alternativeName>
</protein>
<gene>
    <name evidence="1" type="primary">apaH</name>
    <name type="ordered locus">Tola_2372</name>
</gene>
<keyword id="KW-0378">Hydrolase</keyword>
<keyword id="KW-1185">Reference proteome</keyword>
<organism>
    <name type="scientific">Tolumonas auensis (strain DSM 9187 / NBRC 110442 / TA 4)</name>
    <dbReference type="NCBI Taxonomy" id="595494"/>
    <lineage>
        <taxon>Bacteria</taxon>
        <taxon>Pseudomonadati</taxon>
        <taxon>Pseudomonadota</taxon>
        <taxon>Gammaproteobacteria</taxon>
        <taxon>Aeromonadales</taxon>
        <taxon>Aeromonadaceae</taxon>
        <taxon>Tolumonas</taxon>
    </lineage>
</organism>
<comment type="function">
    <text evidence="1">Hydrolyzes diadenosine 5',5'''-P1,P4-tetraphosphate to yield ADP.</text>
</comment>
<comment type="catalytic activity">
    <reaction evidence="1">
        <text>P(1),P(4)-bis(5'-adenosyl) tetraphosphate + H2O = 2 ADP + 2 H(+)</text>
        <dbReference type="Rhea" id="RHEA:24252"/>
        <dbReference type="ChEBI" id="CHEBI:15377"/>
        <dbReference type="ChEBI" id="CHEBI:15378"/>
        <dbReference type="ChEBI" id="CHEBI:58141"/>
        <dbReference type="ChEBI" id="CHEBI:456216"/>
        <dbReference type="EC" id="3.6.1.41"/>
    </reaction>
</comment>
<comment type="similarity">
    <text evidence="1">Belongs to the Ap4A hydrolase family.</text>
</comment>
<accession>C4L9L6</accession>
<name>APAH_TOLAT</name>
<feature type="chain" id="PRO_1000204090" description="Bis(5'-nucleosyl)-tetraphosphatase, symmetrical">
    <location>
        <begin position="1"/>
        <end position="276"/>
    </location>
</feature>
<proteinExistence type="inferred from homology"/>
<sequence>MATYFVGDIQGCNDELQQLLALAQFNPQHDELWLTGDLVARGPKSLDVLRFVYGLGDRATTVLGNHDLNLLAVDAGYSQAKKKDKTENILTAPDRHELMTWLRTQPIMAEHPTLPVMMTHAGLSPQWDLATARHCAREVEMLLRSDQGNWLLGHMYGEEPSHWDARLTGLPRWRYIINSFTRMRFCRNDGSLEFKCKEAPSDKPALLAPWFEVRQAAPDEPHLVFGHWAALMGKCPLPTIKALDTGCVWGNQLTLWRWDDNAMFSLNCPAYASGGE</sequence>
<evidence type="ECO:0000255" key="1">
    <source>
        <dbReference type="HAMAP-Rule" id="MF_00199"/>
    </source>
</evidence>
<dbReference type="EC" id="3.6.1.41" evidence="1"/>
<dbReference type="EMBL" id="CP001616">
    <property type="protein sequence ID" value="ACQ93969.1"/>
    <property type="molecule type" value="Genomic_DNA"/>
</dbReference>
<dbReference type="RefSeq" id="WP_015879437.1">
    <property type="nucleotide sequence ID" value="NC_012691.1"/>
</dbReference>
<dbReference type="SMR" id="C4L9L6"/>
<dbReference type="STRING" id="595494.Tola_2372"/>
<dbReference type="KEGG" id="tau:Tola_2372"/>
<dbReference type="eggNOG" id="COG0639">
    <property type="taxonomic scope" value="Bacteria"/>
</dbReference>
<dbReference type="HOGENOM" id="CLU_056184_2_0_6"/>
<dbReference type="OrthoDB" id="9807890at2"/>
<dbReference type="Proteomes" id="UP000009073">
    <property type="component" value="Chromosome"/>
</dbReference>
<dbReference type="GO" id="GO:0008803">
    <property type="term" value="F:bis(5'-nucleosyl)-tetraphosphatase (symmetrical) activity"/>
    <property type="evidence" value="ECO:0007669"/>
    <property type="project" value="UniProtKB-UniRule"/>
</dbReference>
<dbReference type="CDD" id="cd07422">
    <property type="entry name" value="MPP_ApaH"/>
    <property type="match status" value="1"/>
</dbReference>
<dbReference type="Gene3D" id="3.60.21.10">
    <property type="match status" value="1"/>
</dbReference>
<dbReference type="HAMAP" id="MF_00199">
    <property type="entry name" value="ApaH"/>
    <property type="match status" value="1"/>
</dbReference>
<dbReference type="InterPro" id="IPR004617">
    <property type="entry name" value="ApaH"/>
</dbReference>
<dbReference type="InterPro" id="IPR004843">
    <property type="entry name" value="Calcineurin-like_PHP_ApaH"/>
</dbReference>
<dbReference type="InterPro" id="IPR029052">
    <property type="entry name" value="Metallo-depent_PP-like"/>
</dbReference>
<dbReference type="NCBIfam" id="TIGR00668">
    <property type="entry name" value="apaH"/>
    <property type="match status" value="1"/>
</dbReference>
<dbReference type="NCBIfam" id="NF001204">
    <property type="entry name" value="PRK00166.1"/>
    <property type="match status" value="1"/>
</dbReference>
<dbReference type="PANTHER" id="PTHR40942">
    <property type="match status" value="1"/>
</dbReference>
<dbReference type="PANTHER" id="PTHR40942:SF4">
    <property type="entry name" value="CYTOCHROME C5"/>
    <property type="match status" value="1"/>
</dbReference>
<dbReference type="Pfam" id="PF00149">
    <property type="entry name" value="Metallophos"/>
    <property type="match status" value="1"/>
</dbReference>
<dbReference type="PIRSF" id="PIRSF000903">
    <property type="entry name" value="B5n-ttraPtase_sm"/>
    <property type="match status" value="1"/>
</dbReference>
<dbReference type="SUPFAM" id="SSF56300">
    <property type="entry name" value="Metallo-dependent phosphatases"/>
    <property type="match status" value="1"/>
</dbReference>
<reference key="1">
    <citation type="submission" date="2009-05" db="EMBL/GenBank/DDBJ databases">
        <title>Complete sequence of Tolumonas auensis DSM 9187.</title>
        <authorList>
            <consortium name="US DOE Joint Genome Institute"/>
            <person name="Lucas S."/>
            <person name="Copeland A."/>
            <person name="Lapidus A."/>
            <person name="Glavina del Rio T."/>
            <person name="Tice H."/>
            <person name="Bruce D."/>
            <person name="Goodwin L."/>
            <person name="Pitluck S."/>
            <person name="Chertkov O."/>
            <person name="Brettin T."/>
            <person name="Detter J.C."/>
            <person name="Han C."/>
            <person name="Larimer F."/>
            <person name="Land M."/>
            <person name="Hauser L."/>
            <person name="Kyrpides N."/>
            <person name="Mikhailova N."/>
            <person name="Spring S."/>
            <person name="Beller H."/>
        </authorList>
    </citation>
    <scope>NUCLEOTIDE SEQUENCE [LARGE SCALE GENOMIC DNA]</scope>
    <source>
        <strain>DSM 9187 / NBRC 110442 / TA 4</strain>
    </source>
</reference>